<keyword id="KW-0378">Hydrolase</keyword>
<keyword id="KW-0574">Periplasm</keyword>
<keyword id="KW-0964">Secreted</keyword>
<keyword id="KW-0732">Signal</keyword>
<feature type="signal peptide" evidence="2">
    <location>
        <begin position="1"/>
        <end position="23"/>
    </location>
</feature>
<feature type="chain" id="PRO_0000431610" description="Alkaline phosphatase L" evidence="2">
    <location>
        <begin position="24"/>
        <end position="392"/>
    </location>
</feature>
<protein>
    <recommendedName>
        <fullName>Alkaline phosphatase L</fullName>
        <shortName>L-AP</shortName>
        <ecNumber evidence="1">3.1.3.1</ecNumber>
    </recommendedName>
    <alternativeName>
        <fullName>Low molecular weight phosphatase</fullName>
    </alternativeName>
    <alternativeName>
        <fullName evidence="4">Protein DING</fullName>
    </alternativeName>
</protein>
<organism>
    <name type="scientific">Pseudomonas aeruginosa (strain UCBPP-PA14)</name>
    <dbReference type="NCBI Taxonomy" id="208963"/>
    <lineage>
        <taxon>Bacteria</taxon>
        <taxon>Pseudomonadati</taxon>
        <taxon>Pseudomonadota</taxon>
        <taxon>Gammaproteobacteria</taxon>
        <taxon>Pseudomonadales</taxon>
        <taxon>Pseudomonadaceae</taxon>
        <taxon>Pseudomonas</taxon>
    </lineage>
</organism>
<accession>Q02HI0</accession>
<name>PPBL_PSEAB</name>
<proteinExistence type="evidence at transcript level"/>
<reference key="1">
    <citation type="journal article" date="2006" name="Genome Biol.">
        <title>Genomic analysis reveals that Pseudomonas aeruginosa virulence is combinatorial.</title>
        <authorList>
            <person name="Lee D.G."/>
            <person name="Urbach J.M."/>
            <person name="Wu G."/>
            <person name="Liberati N.T."/>
            <person name="Feinbaum R.L."/>
            <person name="Miyata S."/>
            <person name="Diggins L.T."/>
            <person name="He J."/>
            <person name="Saucier M."/>
            <person name="Deziel E."/>
            <person name="Friedman L."/>
            <person name="Li L."/>
            <person name="Grills G."/>
            <person name="Montgomery K."/>
            <person name="Kucherlapati R."/>
            <person name="Rahme L.G."/>
            <person name="Ausubel F.M."/>
        </authorList>
    </citation>
    <scope>NUCLEOTIDE SEQUENCE [LARGE SCALE GENOMIC DNA]</scope>
    <source>
        <strain>UCBPP-PA14</strain>
    </source>
</reference>
<reference key="2">
    <citation type="journal article" date="2014" name="FEMS Microbiol. Lett.">
        <title>Localization of DING proteins on PstS-containing outer-surface appendages of Pseudomonas aeruginosa.</title>
        <authorList>
            <person name="Shah M."/>
            <person name="Zaborin A."/>
            <person name="Alverdy J.C."/>
            <person name="Scott K."/>
            <person name="Zaborina O."/>
        </authorList>
    </citation>
    <scope>SUBCELLULAR LOCATION</scope>
    <scope>INDUCTION</scope>
    <scope>DISRUPTION PHENOTYPE</scope>
    <source>
        <strain>UCBPP-PA14</strain>
    </source>
</reference>
<dbReference type="EC" id="3.1.3.1" evidence="1"/>
<dbReference type="EMBL" id="CP000438">
    <property type="protein sequence ID" value="ABJ09831.1"/>
    <property type="molecule type" value="Genomic_DNA"/>
</dbReference>
<dbReference type="RefSeq" id="WP_003141140.1">
    <property type="nucleotide sequence ID" value="NC_008463.1"/>
</dbReference>
<dbReference type="SMR" id="Q02HI0"/>
<dbReference type="KEGG" id="pau:PA14_55410"/>
<dbReference type="PseudoCAP" id="PA14_55410"/>
<dbReference type="HOGENOM" id="CLU_047926_0_0_6"/>
<dbReference type="BioCyc" id="PAER208963:G1G74-4667-MONOMER"/>
<dbReference type="Proteomes" id="UP000000653">
    <property type="component" value="Chromosome"/>
</dbReference>
<dbReference type="GO" id="GO:0005576">
    <property type="term" value="C:extracellular region"/>
    <property type="evidence" value="ECO:0007669"/>
    <property type="project" value="UniProtKB-SubCell"/>
</dbReference>
<dbReference type="GO" id="GO:0042597">
    <property type="term" value="C:periplasmic space"/>
    <property type="evidence" value="ECO:0007669"/>
    <property type="project" value="UniProtKB-SubCell"/>
</dbReference>
<dbReference type="GO" id="GO:0004035">
    <property type="term" value="F:alkaline phosphatase activity"/>
    <property type="evidence" value="ECO:0007669"/>
    <property type="project" value="UniProtKB-EC"/>
</dbReference>
<dbReference type="Gene3D" id="3.40.190.10">
    <property type="entry name" value="Periplasmic binding protein-like II"/>
    <property type="match status" value="2"/>
</dbReference>
<dbReference type="InterPro" id="IPR024370">
    <property type="entry name" value="PBP_domain"/>
</dbReference>
<dbReference type="InterPro" id="IPR050962">
    <property type="entry name" value="Phosphate-bind_PstS"/>
</dbReference>
<dbReference type="PANTHER" id="PTHR42996">
    <property type="entry name" value="PHOSPHATE-BINDING PROTEIN PSTS"/>
    <property type="match status" value="1"/>
</dbReference>
<dbReference type="PANTHER" id="PTHR42996:SF1">
    <property type="entry name" value="PHOSPHATE-BINDING PROTEIN PSTS"/>
    <property type="match status" value="1"/>
</dbReference>
<dbReference type="Pfam" id="PF12849">
    <property type="entry name" value="PBP_like_2"/>
    <property type="match status" value="1"/>
</dbReference>
<dbReference type="SUPFAM" id="SSF53850">
    <property type="entry name" value="Periplasmic binding protein-like II"/>
    <property type="match status" value="1"/>
</dbReference>
<gene>
    <name evidence="5" type="primary">phoA2</name>
    <name evidence="4" type="synonym">dinG</name>
    <name type="ordered locus">PA14_55410</name>
</gene>
<comment type="function">
    <text evidence="1">Has both a phosphomonoesterase and phosphodiesterase activity.</text>
</comment>
<comment type="catalytic activity">
    <reaction evidence="1">
        <text>a phosphate monoester + H2O = an alcohol + phosphate</text>
        <dbReference type="Rhea" id="RHEA:15017"/>
        <dbReference type="ChEBI" id="CHEBI:15377"/>
        <dbReference type="ChEBI" id="CHEBI:30879"/>
        <dbReference type="ChEBI" id="CHEBI:43474"/>
        <dbReference type="ChEBI" id="CHEBI:67140"/>
        <dbReference type="EC" id="3.1.3.1"/>
    </reaction>
</comment>
<comment type="subunit">
    <text evidence="1">Homodimer.</text>
</comment>
<comment type="subcellular location">
    <subcellularLocation>
        <location evidence="6">Secreted</location>
    </subcellularLocation>
    <subcellularLocation>
        <location evidence="1">Periplasm</location>
    </subcellularLocation>
    <text evidence="3">Forms long appendages distinct from flagella or pili on the cell surface in approximately 1% of cells. When overexpressed more cells form more appendages.</text>
</comment>
<comment type="induction">
    <text evidence="3">Suppressed by inorganic phosphate.</text>
</comment>
<comment type="disruption phenotype">
    <text evidence="3">Strains are still able to make extracellular appendages that include PstS.</text>
</comment>
<comment type="similarity">
    <text evidence="5">Belongs to the PstS family.</text>
</comment>
<evidence type="ECO:0000250" key="1">
    <source>
        <dbReference type="UniProtKB" id="P35482"/>
    </source>
</evidence>
<evidence type="ECO:0000255" key="2"/>
<evidence type="ECO:0000269" key="3">
    <source>
    </source>
</evidence>
<evidence type="ECO:0000303" key="4">
    <source>
    </source>
</evidence>
<evidence type="ECO:0000305" key="5"/>
<evidence type="ECO:0000305" key="6">
    <source>
    </source>
</evidence>
<sequence length="392" mass="40714">MYKRSLIAASLSVAALVSAQAMADINGGGATLPQQLYQEPGVLTAGFAAYIGVGSGNGKAAFLNNDYTKFVAGTTNKNVHWAGSDSKLSKTNETNPYLSAHGSAWGPLIQVPSVATSVALPFNKSGSNAVNFADVNTLCGVFSGRLTDWSQIPGSGRSGAITVVYRSESSGTTELFTRFLNASCSSTLEGGTFAITTSFGSSFSGGLPAGAVSAQGSQAVMNALNAAQGRITYMSPDFAAPTLAGLDDATKVAQVRGVSPAPANVSAAIGAVTPPTTAQRSDPNNWVPVFAATANPNDPSVRPYPTSGYPILGFTNLIFSQCYANATQTQQVRDFFTRHYGATANNDTAITNHRFVPLPASWKLAVRQSFLTSTNNLYIGHSNVCNGIGRPL</sequence>